<keyword id="KW-0028">Amino-acid biosynthesis</keyword>
<keyword id="KW-0100">Branched-chain amino acid biosynthesis</keyword>
<keyword id="KW-0274">FAD</keyword>
<keyword id="KW-0285">Flavoprotein</keyword>
<keyword id="KW-0460">Magnesium</keyword>
<keyword id="KW-0479">Metal-binding</keyword>
<keyword id="KW-1185">Reference proteome</keyword>
<keyword id="KW-0786">Thiamine pyrophosphate</keyword>
<keyword id="KW-0808">Transferase</keyword>
<dbReference type="EC" id="2.2.1.6"/>
<dbReference type="EMBL" id="L09232">
    <property type="protein sequence ID" value="AAA62429.1"/>
    <property type="molecule type" value="Genomic_DNA"/>
</dbReference>
<dbReference type="EMBL" id="BA000036">
    <property type="protein sequence ID" value="BAB98664.1"/>
    <property type="molecule type" value="Genomic_DNA"/>
</dbReference>
<dbReference type="EMBL" id="BX927151">
    <property type="protein sequence ID" value="CAF19974.1"/>
    <property type="molecule type" value="Genomic_DNA"/>
</dbReference>
<dbReference type="PIR" id="A48648">
    <property type="entry name" value="A48648"/>
</dbReference>
<dbReference type="RefSeq" id="NP_600493.1">
    <property type="nucleotide sequence ID" value="NC_003450.3"/>
</dbReference>
<dbReference type="RefSeq" id="WP_011014246.1">
    <property type="nucleotide sequence ID" value="NC_006958.1"/>
</dbReference>
<dbReference type="SMR" id="P42463"/>
<dbReference type="STRING" id="196627.cg1435"/>
<dbReference type="KEGG" id="cgb:cg1435"/>
<dbReference type="KEGG" id="cgl:Cgl1271"/>
<dbReference type="PATRIC" id="fig|196627.13.peg.1248"/>
<dbReference type="eggNOG" id="COG0028">
    <property type="taxonomic scope" value="Bacteria"/>
</dbReference>
<dbReference type="HOGENOM" id="CLU_013748_1_2_11"/>
<dbReference type="OrthoDB" id="4494979at2"/>
<dbReference type="BioCyc" id="CORYNE:G18NG-10844-MONOMER"/>
<dbReference type="BRENDA" id="2.2.1.6">
    <property type="organism ID" value="960"/>
</dbReference>
<dbReference type="UniPathway" id="UPA00047">
    <property type="reaction ID" value="UER00055"/>
</dbReference>
<dbReference type="UniPathway" id="UPA00049">
    <property type="reaction ID" value="UER00059"/>
</dbReference>
<dbReference type="Proteomes" id="UP000000582">
    <property type="component" value="Chromosome"/>
</dbReference>
<dbReference type="Proteomes" id="UP000001009">
    <property type="component" value="Chromosome"/>
</dbReference>
<dbReference type="GO" id="GO:0005948">
    <property type="term" value="C:acetolactate synthase complex"/>
    <property type="evidence" value="ECO:0007669"/>
    <property type="project" value="TreeGrafter"/>
</dbReference>
<dbReference type="GO" id="GO:0003984">
    <property type="term" value="F:acetolactate synthase activity"/>
    <property type="evidence" value="ECO:0007669"/>
    <property type="project" value="UniProtKB-EC"/>
</dbReference>
<dbReference type="GO" id="GO:0050660">
    <property type="term" value="F:flavin adenine dinucleotide binding"/>
    <property type="evidence" value="ECO:0007669"/>
    <property type="project" value="InterPro"/>
</dbReference>
<dbReference type="GO" id="GO:0000287">
    <property type="term" value="F:magnesium ion binding"/>
    <property type="evidence" value="ECO:0007669"/>
    <property type="project" value="InterPro"/>
</dbReference>
<dbReference type="GO" id="GO:0030976">
    <property type="term" value="F:thiamine pyrophosphate binding"/>
    <property type="evidence" value="ECO:0007669"/>
    <property type="project" value="InterPro"/>
</dbReference>
<dbReference type="GO" id="GO:0009097">
    <property type="term" value="P:isoleucine biosynthetic process"/>
    <property type="evidence" value="ECO:0007669"/>
    <property type="project" value="UniProtKB-UniPathway"/>
</dbReference>
<dbReference type="GO" id="GO:0009099">
    <property type="term" value="P:L-valine biosynthetic process"/>
    <property type="evidence" value="ECO:0007669"/>
    <property type="project" value="UniProtKB-UniPathway"/>
</dbReference>
<dbReference type="CDD" id="cd02015">
    <property type="entry name" value="TPP_AHAS"/>
    <property type="match status" value="1"/>
</dbReference>
<dbReference type="CDD" id="cd07035">
    <property type="entry name" value="TPP_PYR_POX_like"/>
    <property type="match status" value="1"/>
</dbReference>
<dbReference type="FunFam" id="3.40.50.1220:FF:000008">
    <property type="entry name" value="Acetolactate synthase"/>
    <property type="match status" value="1"/>
</dbReference>
<dbReference type="FunFam" id="3.40.50.970:FF:000007">
    <property type="entry name" value="Acetolactate synthase"/>
    <property type="match status" value="1"/>
</dbReference>
<dbReference type="FunFam" id="3.40.50.970:FF:000016">
    <property type="entry name" value="Acetolactate synthase"/>
    <property type="match status" value="1"/>
</dbReference>
<dbReference type="Gene3D" id="3.40.50.970">
    <property type="match status" value="2"/>
</dbReference>
<dbReference type="Gene3D" id="3.40.50.1220">
    <property type="entry name" value="TPP-binding domain"/>
    <property type="match status" value="1"/>
</dbReference>
<dbReference type="InterPro" id="IPR012846">
    <property type="entry name" value="Acetolactate_synth_lsu"/>
</dbReference>
<dbReference type="InterPro" id="IPR039368">
    <property type="entry name" value="AHAS_TPP"/>
</dbReference>
<dbReference type="InterPro" id="IPR029035">
    <property type="entry name" value="DHS-like_NAD/FAD-binding_dom"/>
</dbReference>
<dbReference type="InterPro" id="IPR029061">
    <property type="entry name" value="THDP-binding"/>
</dbReference>
<dbReference type="InterPro" id="IPR012000">
    <property type="entry name" value="Thiamin_PyroP_enz_cen_dom"/>
</dbReference>
<dbReference type="InterPro" id="IPR012001">
    <property type="entry name" value="Thiamin_PyroP_enz_TPP-bd_dom"/>
</dbReference>
<dbReference type="InterPro" id="IPR000399">
    <property type="entry name" value="TPP-bd_CS"/>
</dbReference>
<dbReference type="InterPro" id="IPR045229">
    <property type="entry name" value="TPP_enz"/>
</dbReference>
<dbReference type="InterPro" id="IPR011766">
    <property type="entry name" value="TPP_enzyme_TPP-bd"/>
</dbReference>
<dbReference type="NCBIfam" id="TIGR00118">
    <property type="entry name" value="acolac_lg"/>
    <property type="match status" value="1"/>
</dbReference>
<dbReference type="NCBIfam" id="NF005860">
    <property type="entry name" value="PRK07789.1"/>
    <property type="match status" value="1"/>
</dbReference>
<dbReference type="PANTHER" id="PTHR18968:SF13">
    <property type="entry name" value="ACETOLACTATE SYNTHASE CATALYTIC SUBUNIT, MITOCHONDRIAL"/>
    <property type="match status" value="1"/>
</dbReference>
<dbReference type="PANTHER" id="PTHR18968">
    <property type="entry name" value="THIAMINE PYROPHOSPHATE ENZYMES"/>
    <property type="match status" value="1"/>
</dbReference>
<dbReference type="Pfam" id="PF02775">
    <property type="entry name" value="TPP_enzyme_C"/>
    <property type="match status" value="1"/>
</dbReference>
<dbReference type="Pfam" id="PF00205">
    <property type="entry name" value="TPP_enzyme_M"/>
    <property type="match status" value="1"/>
</dbReference>
<dbReference type="Pfam" id="PF02776">
    <property type="entry name" value="TPP_enzyme_N"/>
    <property type="match status" value="1"/>
</dbReference>
<dbReference type="SUPFAM" id="SSF52467">
    <property type="entry name" value="DHS-like NAD/FAD-binding domain"/>
    <property type="match status" value="1"/>
</dbReference>
<dbReference type="SUPFAM" id="SSF52518">
    <property type="entry name" value="Thiamin diphosphate-binding fold (THDP-binding)"/>
    <property type="match status" value="2"/>
</dbReference>
<dbReference type="PROSITE" id="PS00187">
    <property type="entry name" value="TPP_ENZYMES"/>
    <property type="match status" value="1"/>
</dbReference>
<gene>
    <name type="primary">ilvB</name>
    <name type="ordered locus">Cgl1271</name>
    <name type="ordered locus">cg1435</name>
</gene>
<proteinExistence type="inferred from homology"/>
<organism>
    <name type="scientific">Corynebacterium glutamicum (strain ATCC 13032 / DSM 20300 / JCM 1318 / BCRC 11384 / CCUG 27702 / LMG 3730 / NBRC 12168 / NCIMB 10025 / NRRL B-2784 / 534)</name>
    <dbReference type="NCBI Taxonomy" id="196627"/>
    <lineage>
        <taxon>Bacteria</taxon>
        <taxon>Bacillati</taxon>
        <taxon>Actinomycetota</taxon>
        <taxon>Actinomycetes</taxon>
        <taxon>Mycobacteriales</taxon>
        <taxon>Corynebacteriaceae</taxon>
        <taxon>Corynebacterium</taxon>
    </lineage>
</organism>
<name>ILVB_CORGL</name>
<protein>
    <recommendedName>
        <fullName>Acetolactate synthase large subunit</fullName>
        <shortName>AHAS</shortName>
        <ecNumber>2.2.1.6</ecNumber>
    </recommendedName>
    <alternativeName>
        <fullName>Acetohydroxy-acid synthase large subunit</fullName>
        <shortName>ALS</shortName>
    </alternativeName>
</protein>
<sequence length="626" mass="66846">MNVAASQQPTPATVASRGRSAAPERMTGAKAIVRSLEELNADIVFGIPGGAVLPVYDPLYSSTKVRHVLVRHEQGAGHAATGYAQVTGRVGVCIATSGPGATNLVTPIADANLDSVPMVAITGQVGSGLLGTDAFQEADIRGITMPVTKHNFMVTNPNDIPQALAEAFHLAITGRPGPVLVDIPKDVQNAELDFVWPPKIDLPGYRPVSTPHARQIEQAVKLIGEAKKPVLYVGGGVIKADAHEELRAFAEYTGIPVVTTLMALGTFPESHELHMGMPGMHGTVSAVGALQRSDLLIAIGSRFDDRVTGDVDTFAPDAKIIHADIDPAEIGKIKQVEVPIVGDAREVLARLLETTKASKAETEDISEWVDYLKGLKARFPRGYDEQPGDLLAPQFVIETLSKEVGPDAIYCAGVGQHQMWAAQFVDFEKPRTWLNSGGLGTMGYAVPAALGAKAGAPDKEVWAIDGDGCFQMTNQELTTAAVEGFPIKIALINNGNLGMVRQWQTLFYEGRYSNTKLRNQGEYMPDFVTLSEGLGCVAIRVTKAEEVLPAIQKAREINDRPVVIDFIVGEDAQVWPMVSAGSSNSDIQYALGLRPFFDGDESAAEDPADIHEAVSDIDAAVESTEA</sequence>
<feature type="chain" id="PRO_0000090787" description="Acetolactate synthase large subunit">
    <location>
        <begin position="1"/>
        <end position="626"/>
    </location>
</feature>
<feature type="region of interest" description="Disordered" evidence="2">
    <location>
        <begin position="1"/>
        <end position="23"/>
    </location>
</feature>
<feature type="region of interest" description="Thiamine pyrophosphate binding">
    <location>
        <begin position="416"/>
        <end position="496"/>
    </location>
</feature>
<feature type="compositionally biased region" description="Polar residues" evidence="2">
    <location>
        <begin position="1"/>
        <end position="13"/>
    </location>
</feature>
<feature type="binding site" evidence="1">
    <location>
        <position position="73"/>
    </location>
    <ligand>
        <name>thiamine diphosphate</name>
        <dbReference type="ChEBI" id="CHEBI:58937"/>
    </ligand>
</feature>
<feature type="binding site" evidence="1">
    <location>
        <position position="175"/>
    </location>
    <ligand>
        <name>FAD</name>
        <dbReference type="ChEBI" id="CHEBI:57692"/>
    </ligand>
</feature>
<feature type="binding site" evidence="1">
    <location>
        <begin position="281"/>
        <end position="302"/>
    </location>
    <ligand>
        <name>FAD</name>
        <dbReference type="ChEBI" id="CHEBI:57692"/>
    </ligand>
</feature>
<feature type="binding site" evidence="1">
    <location>
        <begin position="324"/>
        <end position="343"/>
    </location>
    <ligand>
        <name>FAD</name>
        <dbReference type="ChEBI" id="CHEBI:57692"/>
    </ligand>
</feature>
<feature type="binding site" evidence="1">
    <location>
        <position position="467"/>
    </location>
    <ligand>
        <name>Mg(2+)</name>
        <dbReference type="ChEBI" id="CHEBI:18420"/>
    </ligand>
</feature>
<feature type="binding site" evidence="1">
    <location>
        <position position="494"/>
    </location>
    <ligand>
        <name>Mg(2+)</name>
        <dbReference type="ChEBI" id="CHEBI:18420"/>
    </ligand>
</feature>
<evidence type="ECO:0000250" key="1"/>
<evidence type="ECO:0000256" key="2">
    <source>
        <dbReference type="SAM" id="MobiDB-lite"/>
    </source>
</evidence>
<evidence type="ECO:0000305" key="3"/>
<reference key="1">
    <citation type="journal article" date="1993" name="J. Bacteriol.">
        <title>Isoleucine synthesis in Corynebacterium glutamicum: molecular analysis of the ilvB-ilvN-ilvC operon.</title>
        <authorList>
            <person name="Keilhauer C."/>
            <person name="Eggeling L."/>
            <person name="Sahm H."/>
        </authorList>
    </citation>
    <scope>NUCLEOTIDE SEQUENCE [GENOMIC DNA]</scope>
    <source>
        <strain>ATCC 13032 / DSM 20300 / JCM 1318 / BCRC 11384 / CCUG 27702 / LMG 3730 / NBRC 12168 / NCIMB 10025 / NRRL B-2784 / 534</strain>
    </source>
</reference>
<reference key="2">
    <citation type="journal article" date="2003" name="Appl. Microbiol. Biotechnol.">
        <title>The Corynebacterium glutamicum genome: features and impacts on biotechnological processes.</title>
        <authorList>
            <person name="Ikeda M."/>
            <person name="Nakagawa S."/>
        </authorList>
    </citation>
    <scope>NUCLEOTIDE SEQUENCE [LARGE SCALE GENOMIC DNA]</scope>
    <source>
        <strain>ATCC 13032 / DSM 20300 / JCM 1318 / BCRC 11384 / CCUG 27702 / LMG 3730 / NBRC 12168 / NCIMB 10025 / NRRL B-2784 / 534</strain>
    </source>
</reference>
<reference key="3">
    <citation type="journal article" date="2003" name="J. Biotechnol.">
        <title>The complete Corynebacterium glutamicum ATCC 13032 genome sequence and its impact on the production of L-aspartate-derived amino acids and vitamins.</title>
        <authorList>
            <person name="Kalinowski J."/>
            <person name="Bathe B."/>
            <person name="Bartels D."/>
            <person name="Bischoff N."/>
            <person name="Bott M."/>
            <person name="Burkovski A."/>
            <person name="Dusch N."/>
            <person name="Eggeling L."/>
            <person name="Eikmanns B.J."/>
            <person name="Gaigalat L."/>
            <person name="Goesmann A."/>
            <person name="Hartmann M."/>
            <person name="Huthmacher K."/>
            <person name="Kraemer R."/>
            <person name="Linke B."/>
            <person name="McHardy A.C."/>
            <person name="Meyer F."/>
            <person name="Moeckel B."/>
            <person name="Pfefferle W."/>
            <person name="Puehler A."/>
            <person name="Rey D.A."/>
            <person name="Rueckert C."/>
            <person name="Rupp O."/>
            <person name="Sahm H."/>
            <person name="Wendisch V.F."/>
            <person name="Wiegraebe I."/>
            <person name="Tauch A."/>
        </authorList>
    </citation>
    <scope>NUCLEOTIDE SEQUENCE [LARGE SCALE GENOMIC DNA]</scope>
    <source>
        <strain>ATCC 13032 / DSM 20300 / JCM 1318 / BCRC 11384 / CCUG 27702 / LMG 3730 / NBRC 12168 / NCIMB 10025 / NRRL B-2784 / 534</strain>
    </source>
</reference>
<comment type="catalytic activity">
    <reaction>
        <text>2 pyruvate + H(+) = (2S)-2-acetolactate + CO2</text>
        <dbReference type="Rhea" id="RHEA:25249"/>
        <dbReference type="ChEBI" id="CHEBI:15361"/>
        <dbReference type="ChEBI" id="CHEBI:15378"/>
        <dbReference type="ChEBI" id="CHEBI:16526"/>
        <dbReference type="ChEBI" id="CHEBI:58476"/>
        <dbReference type="EC" id="2.2.1.6"/>
    </reaction>
</comment>
<comment type="cofactor">
    <cofactor evidence="1">
        <name>Mg(2+)</name>
        <dbReference type="ChEBI" id="CHEBI:18420"/>
    </cofactor>
    <text evidence="1">Binds 1 Mg(2+) ion per subunit.</text>
</comment>
<comment type="cofactor">
    <cofactor evidence="1">
        <name>thiamine diphosphate</name>
        <dbReference type="ChEBI" id="CHEBI:58937"/>
    </cofactor>
    <text evidence="1">Binds 1 thiamine pyrophosphate per subunit.</text>
</comment>
<comment type="pathway">
    <text>Amino-acid biosynthesis; L-isoleucine biosynthesis; L-isoleucine from 2-oxobutanoate: step 1/4.</text>
</comment>
<comment type="pathway">
    <text>Amino-acid biosynthesis; L-valine biosynthesis; L-valine from pyruvate: step 1/4.</text>
</comment>
<comment type="subunit">
    <text>Dimer of large and small chains.</text>
</comment>
<comment type="miscellaneous">
    <text evidence="1">Contains 1 molecule of FAD per monomer. The role of this cofactor is not clear considering that the reaction does not involve redox chemistry (By similarity).</text>
</comment>
<comment type="similarity">
    <text evidence="3">Belongs to the TPP enzyme family.</text>
</comment>
<accession>P42463</accession>